<proteinExistence type="inferred from homology"/>
<feature type="chain" id="PRO_0000209398" description="D-glycero-beta-D-manno-heptose-1,7-bisphosphate 7-phosphatase">
    <location>
        <begin position="1"/>
        <end position="187"/>
    </location>
</feature>
<feature type="active site" description="Nucleophile" evidence="1">
    <location>
        <position position="7"/>
    </location>
</feature>
<feature type="active site" description="Proton donor" evidence="1">
    <location>
        <position position="9"/>
    </location>
</feature>
<feature type="binding site" evidence="1">
    <location>
        <begin position="7"/>
        <end position="9"/>
    </location>
    <ligand>
        <name>substrate</name>
    </ligand>
</feature>
<feature type="binding site" evidence="2">
    <location>
        <position position="7"/>
    </location>
    <ligand>
        <name>Mg(2+)</name>
        <dbReference type="ChEBI" id="CHEBI:18420"/>
    </ligand>
</feature>
<feature type="binding site" evidence="2">
    <location>
        <position position="9"/>
    </location>
    <ligand>
        <name>Mg(2+)</name>
        <dbReference type="ChEBI" id="CHEBI:18420"/>
    </ligand>
</feature>
<feature type="binding site" evidence="1">
    <location>
        <begin position="15"/>
        <end position="19"/>
    </location>
    <ligand>
        <name>substrate</name>
    </ligand>
</feature>
<feature type="binding site" evidence="1">
    <location>
        <begin position="50"/>
        <end position="53"/>
    </location>
    <ligand>
        <name>substrate</name>
    </ligand>
</feature>
<feature type="binding site" evidence="2">
    <location>
        <position position="89"/>
    </location>
    <ligand>
        <name>Zn(2+)</name>
        <dbReference type="ChEBI" id="CHEBI:29105"/>
    </ligand>
</feature>
<feature type="binding site" evidence="2">
    <location>
        <position position="91"/>
    </location>
    <ligand>
        <name>Zn(2+)</name>
        <dbReference type="ChEBI" id="CHEBI:29105"/>
    </ligand>
</feature>
<feature type="binding site" evidence="2">
    <location>
        <position position="97"/>
    </location>
    <ligand>
        <name>Zn(2+)</name>
        <dbReference type="ChEBI" id="CHEBI:29105"/>
    </ligand>
</feature>
<feature type="binding site" evidence="2">
    <location>
        <position position="99"/>
    </location>
    <ligand>
        <name>Zn(2+)</name>
        <dbReference type="ChEBI" id="CHEBI:29105"/>
    </ligand>
</feature>
<feature type="binding site" evidence="1">
    <location>
        <begin position="100"/>
        <end position="101"/>
    </location>
    <ligand>
        <name>substrate</name>
    </ligand>
</feature>
<feature type="binding site" evidence="2">
    <location>
        <position position="126"/>
    </location>
    <ligand>
        <name>Mg(2+)</name>
        <dbReference type="ChEBI" id="CHEBI:18420"/>
    </ligand>
</feature>
<feature type="site" description="Stabilizes the phosphoryl group" evidence="1">
    <location>
        <position position="50"/>
    </location>
</feature>
<feature type="site" description="Contributes to substrate recognition" evidence="1">
    <location>
        <position position="100"/>
    </location>
</feature>
<feature type="site" description="Stabilizes the phosphoryl group" evidence="1">
    <location>
        <position position="101"/>
    </location>
</feature>
<reference key="1">
    <citation type="journal article" date="2000" name="Nature">
        <title>Complete DNA sequence of a serogroup A strain of Neisseria meningitidis Z2491.</title>
        <authorList>
            <person name="Parkhill J."/>
            <person name="Achtman M."/>
            <person name="James K.D."/>
            <person name="Bentley S.D."/>
            <person name="Churcher C.M."/>
            <person name="Klee S.R."/>
            <person name="Morelli G."/>
            <person name="Basham D."/>
            <person name="Brown D."/>
            <person name="Chillingworth T."/>
            <person name="Davies R.M."/>
            <person name="Davis P."/>
            <person name="Devlin K."/>
            <person name="Feltwell T."/>
            <person name="Hamlin N."/>
            <person name="Holroyd S."/>
            <person name="Jagels K."/>
            <person name="Leather S."/>
            <person name="Moule S."/>
            <person name="Mungall K.L."/>
            <person name="Quail M.A."/>
            <person name="Rajandream M.A."/>
            <person name="Rutherford K.M."/>
            <person name="Simmonds M."/>
            <person name="Skelton J."/>
            <person name="Whitehead S."/>
            <person name="Spratt B.G."/>
            <person name="Barrell B.G."/>
        </authorList>
    </citation>
    <scope>NUCLEOTIDE SEQUENCE [LARGE SCALE GENOMIC DNA]</scope>
    <source>
        <strain>DSM 15465 / Z2491</strain>
    </source>
</reference>
<reference key="2">
    <citation type="journal article" date="2002" name="Microbiology">
        <title>Novel pathways for biosynthesis of nucleotide-activated glycero-manno-heptose precursors of bacterial glycoproteins and cell surface polysaccharides.</title>
        <authorList>
            <person name="Valvano M.A."/>
            <person name="Messner P."/>
            <person name="Kosma P."/>
        </authorList>
    </citation>
    <scope>BIOSYNTHESIS OF NUCLEOTIDE-ACTIVATED GLYCERO-MANNO-HEPTOSE</scope>
</reference>
<dbReference type="EC" id="3.1.3.82"/>
<dbReference type="EMBL" id="AL157959">
    <property type="protein sequence ID" value="CAM07694.1"/>
    <property type="molecule type" value="Genomic_DNA"/>
</dbReference>
<dbReference type="PIR" id="B81957">
    <property type="entry name" value="B81957"/>
</dbReference>
<dbReference type="RefSeq" id="WP_002214967.1">
    <property type="nucleotide sequence ID" value="NC_003116.1"/>
</dbReference>
<dbReference type="SMR" id="Q9JWE9"/>
<dbReference type="EnsemblBacteria" id="CAM07694">
    <property type="protein sequence ID" value="CAM07694"/>
    <property type="gene ID" value="NMA0405"/>
</dbReference>
<dbReference type="GeneID" id="93386958"/>
<dbReference type="KEGG" id="nma:NMA0405"/>
<dbReference type="HOGENOM" id="CLU_085077_2_0_4"/>
<dbReference type="BRENDA" id="3.1.3.82">
    <property type="organism ID" value="3593"/>
</dbReference>
<dbReference type="UniPathway" id="UPA00356">
    <property type="reaction ID" value="UER00438"/>
</dbReference>
<dbReference type="UniPathway" id="UPA00976"/>
<dbReference type="Proteomes" id="UP000000626">
    <property type="component" value="Chromosome"/>
</dbReference>
<dbReference type="GO" id="GO:0005737">
    <property type="term" value="C:cytoplasm"/>
    <property type="evidence" value="ECO:0007669"/>
    <property type="project" value="UniProtKB-SubCell"/>
</dbReference>
<dbReference type="GO" id="GO:0034200">
    <property type="term" value="F:D-glycero-beta-D-manno-heptose 1,7-bisphosphate 7-phosphatase activity"/>
    <property type="evidence" value="ECO:0000250"/>
    <property type="project" value="UniProtKB"/>
</dbReference>
<dbReference type="GO" id="GO:0000287">
    <property type="term" value="F:magnesium ion binding"/>
    <property type="evidence" value="ECO:0000250"/>
    <property type="project" value="UniProtKB"/>
</dbReference>
<dbReference type="GO" id="GO:0008270">
    <property type="term" value="F:zinc ion binding"/>
    <property type="evidence" value="ECO:0000250"/>
    <property type="project" value="UniProtKB"/>
</dbReference>
<dbReference type="GO" id="GO:0097171">
    <property type="term" value="P:ADP-L-glycero-beta-D-manno-heptose biosynthetic process"/>
    <property type="evidence" value="ECO:0007669"/>
    <property type="project" value="UniProtKB-UniPathway"/>
</dbReference>
<dbReference type="GO" id="GO:0005975">
    <property type="term" value="P:carbohydrate metabolic process"/>
    <property type="evidence" value="ECO:0007669"/>
    <property type="project" value="InterPro"/>
</dbReference>
<dbReference type="CDD" id="cd07503">
    <property type="entry name" value="HAD_HisB-N"/>
    <property type="match status" value="1"/>
</dbReference>
<dbReference type="FunFam" id="3.40.50.1000:FF:000168">
    <property type="entry name" value="D,D-heptose 1,7-bisphosphate phosphatase"/>
    <property type="match status" value="1"/>
</dbReference>
<dbReference type="Gene3D" id="3.40.50.1000">
    <property type="entry name" value="HAD superfamily/HAD-like"/>
    <property type="match status" value="1"/>
</dbReference>
<dbReference type="InterPro" id="IPR036412">
    <property type="entry name" value="HAD-like_sf"/>
</dbReference>
<dbReference type="InterPro" id="IPR006549">
    <property type="entry name" value="HAD-SF_hydro_IIIA"/>
</dbReference>
<dbReference type="InterPro" id="IPR023214">
    <property type="entry name" value="HAD_sf"/>
</dbReference>
<dbReference type="InterPro" id="IPR004446">
    <property type="entry name" value="Heptose_bisP_phosphatase"/>
</dbReference>
<dbReference type="InterPro" id="IPR006543">
    <property type="entry name" value="Histidinol-phos"/>
</dbReference>
<dbReference type="NCBIfam" id="TIGR01662">
    <property type="entry name" value="HAD-SF-IIIA"/>
    <property type="match status" value="1"/>
</dbReference>
<dbReference type="NCBIfam" id="TIGR01656">
    <property type="entry name" value="Histidinol-ppas"/>
    <property type="match status" value="1"/>
</dbReference>
<dbReference type="NCBIfam" id="NF006506">
    <property type="entry name" value="PRK08942.1"/>
    <property type="match status" value="1"/>
</dbReference>
<dbReference type="PANTHER" id="PTHR42891">
    <property type="entry name" value="D-GLYCERO-BETA-D-MANNO-HEPTOSE-1,7-BISPHOSPHATE 7-PHOSPHATASE"/>
    <property type="match status" value="1"/>
</dbReference>
<dbReference type="PANTHER" id="PTHR42891:SF1">
    <property type="entry name" value="D-GLYCERO-BETA-D-MANNO-HEPTOSE-1,7-BISPHOSPHATE 7-PHOSPHATASE"/>
    <property type="match status" value="1"/>
</dbReference>
<dbReference type="Pfam" id="PF00702">
    <property type="entry name" value="Hydrolase"/>
    <property type="match status" value="1"/>
</dbReference>
<dbReference type="PIRSF" id="PIRSF004682">
    <property type="entry name" value="GmhB"/>
    <property type="match status" value="1"/>
</dbReference>
<dbReference type="SUPFAM" id="SSF56784">
    <property type="entry name" value="HAD-like"/>
    <property type="match status" value="1"/>
</dbReference>
<keyword id="KW-0119">Carbohydrate metabolism</keyword>
<keyword id="KW-0963">Cytoplasm</keyword>
<keyword id="KW-0378">Hydrolase</keyword>
<keyword id="KW-0460">Magnesium</keyword>
<keyword id="KW-0479">Metal-binding</keyword>
<keyword id="KW-0862">Zinc</keyword>
<gene>
    <name type="primary">gmhB</name>
    <name type="ordered locus">NMA0405</name>
</gene>
<protein>
    <recommendedName>
        <fullName>D-glycero-beta-D-manno-heptose-1,7-bisphosphate 7-phosphatase</fullName>
        <ecNumber>3.1.3.82</ecNumber>
    </recommendedName>
    <alternativeName>
        <fullName>D,D-heptose 1,7-bisphosphate phosphatase</fullName>
        <shortName>HBP phosphatase</shortName>
    </alternativeName>
</protein>
<accession>Q9JWE9</accession>
<accession>A1IPM4</accession>
<comment type="function">
    <text evidence="1">Converts the D-glycero-beta-D-manno-heptose 1,7-bisphosphate intermediate into D-glycero-beta-D-manno-heptose 1-phosphate by removing the phosphate group at the C-7 position.</text>
</comment>
<comment type="catalytic activity">
    <reaction>
        <text>D-glycero-beta-D-manno-heptose 1,7-bisphosphate + H2O = D-glycero-beta-D-manno-heptose 1-phosphate + phosphate</text>
        <dbReference type="Rhea" id="RHEA:28518"/>
        <dbReference type="ChEBI" id="CHEBI:15377"/>
        <dbReference type="ChEBI" id="CHEBI:43474"/>
        <dbReference type="ChEBI" id="CHEBI:60208"/>
        <dbReference type="ChEBI" id="CHEBI:61593"/>
        <dbReference type="EC" id="3.1.3.82"/>
    </reaction>
</comment>
<comment type="cofactor">
    <cofactor evidence="1">
        <name>Mg(2+)</name>
        <dbReference type="ChEBI" id="CHEBI:18420"/>
    </cofactor>
</comment>
<comment type="cofactor">
    <cofactor evidence="1">
        <name>Zn(2+)</name>
        <dbReference type="ChEBI" id="CHEBI:29105"/>
    </cofactor>
</comment>
<comment type="pathway">
    <text>Nucleotide-sugar biosynthesis; ADP-L-glycero-beta-D-manno-heptose biosynthesis; ADP-L-glycero-beta-D-manno-heptose from D-glycero-beta-D-manno-heptose 7-phosphate: step 2/4.</text>
</comment>
<comment type="pathway">
    <text>Bacterial outer membrane biogenesis; LOS core biosynthesis.</text>
</comment>
<comment type="subunit">
    <text evidence="1">Monomer.</text>
</comment>
<comment type="subcellular location">
    <subcellularLocation>
        <location evidence="1">Cytoplasm</location>
    </subcellularLocation>
</comment>
<comment type="similarity">
    <text evidence="3">Belongs to the GmhB family.</text>
</comment>
<sequence>MKLIILDRDGVINQDRDDFVKSVDEWIPVEGSMDAVAFLTQAGYTVAVATNQSGIGRKYFTVQNLTEMHAKMHRLVRQAGGEINGIWFCPHTDADNCNCRKPKPGMIEDIIGRFNAQASETWLVGDSLRDLQAIDAVGGKPALVLTGKGKKTLSQHGHELPEHTQVFDTLLDFSQYIMQENAAPQAD</sequence>
<evidence type="ECO:0000250" key="1"/>
<evidence type="ECO:0000250" key="2">
    <source>
        <dbReference type="UniProtKB" id="Q7WG29"/>
    </source>
</evidence>
<evidence type="ECO:0000305" key="3"/>
<name>GMHBB_NEIMA</name>
<organism>
    <name type="scientific">Neisseria meningitidis serogroup A / serotype 4A (strain DSM 15465 / Z2491)</name>
    <dbReference type="NCBI Taxonomy" id="122587"/>
    <lineage>
        <taxon>Bacteria</taxon>
        <taxon>Pseudomonadati</taxon>
        <taxon>Pseudomonadota</taxon>
        <taxon>Betaproteobacteria</taxon>
        <taxon>Neisseriales</taxon>
        <taxon>Neisseriaceae</taxon>
        <taxon>Neisseria</taxon>
    </lineage>
</organism>